<proteinExistence type="evidence at transcript level"/>
<evidence type="ECO:0000250" key="1"/>
<evidence type="ECO:0000250" key="2">
    <source>
        <dbReference type="UniProtKB" id="Q9DCF9"/>
    </source>
</evidence>
<evidence type="ECO:0000250" key="3">
    <source>
        <dbReference type="UniProtKB" id="Q9UNL2"/>
    </source>
</evidence>
<evidence type="ECO:0000255" key="4"/>
<evidence type="ECO:0000305" key="5"/>
<organism>
    <name type="scientific">Pongo abelii</name>
    <name type="common">Sumatran orangutan</name>
    <name type="synonym">Pongo pygmaeus abelii</name>
    <dbReference type="NCBI Taxonomy" id="9601"/>
    <lineage>
        <taxon>Eukaryota</taxon>
        <taxon>Metazoa</taxon>
        <taxon>Chordata</taxon>
        <taxon>Craniata</taxon>
        <taxon>Vertebrata</taxon>
        <taxon>Euteleostomi</taxon>
        <taxon>Mammalia</taxon>
        <taxon>Eutheria</taxon>
        <taxon>Euarchontoglires</taxon>
        <taxon>Primates</taxon>
        <taxon>Haplorrhini</taxon>
        <taxon>Catarrhini</taxon>
        <taxon>Hominidae</taxon>
        <taxon>Pongo</taxon>
    </lineage>
</organism>
<reference key="1">
    <citation type="submission" date="2004-11" db="EMBL/GenBank/DDBJ databases">
        <authorList>
            <consortium name="The German cDNA consortium"/>
        </authorList>
    </citation>
    <scope>NUCLEOTIDE SEQUENCE [LARGE SCALE MRNA]</scope>
    <source>
        <tissue>Brain cortex</tissue>
    </source>
</reference>
<gene>
    <name type="primary">SSR3</name>
</gene>
<protein>
    <recommendedName>
        <fullName>Translocon-associated protein subunit gamma</fullName>
        <shortName>TRAP-gamma</shortName>
    </recommendedName>
    <alternativeName>
        <fullName>Signal sequence receptor subunit gamma</fullName>
        <shortName>SSR-gamma</shortName>
    </alternativeName>
</protein>
<dbReference type="EMBL" id="CR858334">
    <property type="protein sequence ID" value="CAH90570.1"/>
    <property type="molecule type" value="mRNA"/>
</dbReference>
<dbReference type="RefSeq" id="NP_001127303.1">
    <property type="nucleotide sequence ID" value="NM_001133831.1"/>
</dbReference>
<dbReference type="SMR" id="Q5RCD7"/>
<dbReference type="FunCoup" id="Q5RCD7">
    <property type="interactions" value="1754"/>
</dbReference>
<dbReference type="STRING" id="9601.ENSPPYP00000015913"/>
<dbReference type="Ensembl" id="ENSPPYT00000016546.3">
    <property type="protein sequence ID" value="ENSPPYP00000015913.2"/>
    <property type="gene ID" value="ENSPPYG00000014233.3"/>
</dbReference>
<dbReference type="GeneID" id="100174364"/>
<dbReference type="KEGG" id="pon:100174364"/>
<dbReference type="CTD" id="6747"/>
<dbReference type="eggNOG" id="KOG4490">
    <property type="taxonomic scope" value="Eukaryota"/>
</dbReference>
<dbReference type="GeneTree" id="ENSGT00390000000970"/>
<dbReference type="HOGENOM" id="CLU_092935_0_0_1"/>
<dbReference type="InParanoid" id="Q5RCD7"/>
<dbReference type="OMA" id="PLWLFWR"/>
<dbReference type="OrthoDB" id="10059529at2759"/>
<dbReference type="TreeFam" id="TF314998"/>
<dbReference type="Proteomes" id="UP000001595">
    <property type="component" value="Chromosome 3"/>
</dbReference>
<dbReference type="GO" id="GO:0005789">
    <property type="term" value="C:endoplasmic reticulum membrane"/>
    <property type="evidence" value="ECO:0007669"/>
    <property type="project" value="UniProtKB-SubCell"/>
</dbReference>
<dbReference type="GO" id="GO:0006614">
    <property type="term" value="P:SRP-dependent cotranslational protein targeting to membrane"/>
    <property type="evidence" value="ECO:0007669"/>
    <property type="project" value="InterPro"/>
</dbReference>
<dbReference type="InterPro" id="IPR009779">
    <property type="entry name" value="SSR3"/>
</dbReference>
<dbReference type="PANTHER" id="PTHR13399:SF3">
    <property type="entry name" value="TRANSLOCON-ASSOCIATED PROTEIN SUBUNIT GAMMA"/>
    <property type="match status" value="1"/>
</dbReference>
<dbReference type="PANTHER" id="PTHR13399">
    <property type="entry name" value="TRANSLOCON-ASSOCIATED PROTEIN TRAP , GAMMA SUBUNIT"/>
    <property type="match status" value="1"/>
</dbReference>
<dbReference type="Pfam" id="PF07074">
    <property type="entry name" value="TRAP-gamma"/>
    <property type="match status" value="1"/>
</dbReference>
<sequence>MAPKGSCKQQSEEDLLLQDFSRNLSAKSSALFFGNAFIVSAIPIWLYWRIWHMDLIQSAVLYSVMTLVSTYLVAFAYKNVKFVLKHKVAQKREDAVSKEVTRKLSEADNRKMSRKEKDERILWKKNEVADYEATTFSIFYNNTLFLVVVIVASFFILKNFNPTVNYILSISASSGLIALLSTGSK</sequence>
<feature type="chain" id="PRO_0000191692" description="Translocon-associated protein subunit gamma">
    <location>
        <begin position="1"/>
        <end position="185"/>
    </location>
</feature>
<feature type="topological domain" description="Lumenal" evidence="4">
    <location>
        <begin position="1"/>
        <end position="27"/>
    </location>
</feature>
<feature type="transmembrane region" description="Helical" evidence="4">
    <location>
        <begin position="28"/>
        <end position="48"/>
    </location>
</feature>
<feature type="topological domain" description="Cytoplasmic" evidence="4">
    <location>
        <begin position="49"/>
        <end position="54"/>
    </location>
</feature>
<feature type="transmembrane region" description="Helical" evidence="4">
    <location>
        <begin position="55"/>
        <end position="76"/>
    </location>
</feature>
<feature type="topological domain" description="Lumenal" evidence="4">
    <location>
        <begin position="77"/>
        <end position="135"/>
    </location>
</feature>
<feature type="transmembrane region" description="Helical" evidence="4">
    <location>
        <begin position="136"/>
        <end position="157"/>
    </location>
</feature>
<feature type="topological domain" description="Cytoplasmic" evidence="4">
    <location>
        <begin position="158"/>
        <end position="163"/>
    </location>
</feature>
<feature type="transmembrane region" description="Helical" evidence="4">
    <location>
        <begin position="164"/>
        <end position="184"/>
    </location>
</feature>
<feature type="modified residue" description="N-acetylmethionine" evidence="3">
    <location>
        <position position="1"/>
    </location>
</feature>
<feature type="modified residue" description="Phosphoserine" evidence="3">
    <location>
        <position position="11"/>
    </location>
</feature>
<feature type="modified residue" description="Phosphoserine" evidence="2">
    <location>
        <position position="105"/>
    </location>
</feature>
<keyword id="KW-0007">Acetylation</keyword>
<keyword id="KW-0256">Endoplasmic reticulum</keyword>
<keyword id="KW-0472">Membrane</keyword>
<keyword id="KW-0597">Phosphoprotein</keyword>
<keyword id="KW-1185">Reference proteome</keyword>
<keyword id="KW-0812">Transmembrane</keyword>
<keyword id="KW-1133">Transmembrane helix</keyword>
<comment type="function">
    <text evidence="1">TRAP proteins are part of a complex whose function is to bind calcium to the ER membrane and thereby regulate the retention of ER resident proteins.</text>
</comment>
<comment type="subunit">
    <text evidence="1">Heterotetramer of TRAP-alpha, TRAP-beta, TRAP-delta and TRAP-gamma.</text>
</comment>
<comment type="subcellular location">
    <subcellularLocation>
        <location evidence="1">Endoplasmic reticulum membrane</location>
        <topology evidence="1">Multi-pass membrane protein</topology>
    </subcellularLocation>
</comment>
<comment type="similarity">
    <text evidence="5">Belongs to the TRAP-gamma family.</text>
</comment>
<name>SSRG_PONAB</name>
<accession>Q5RCD7</accession>